<proteinExistence type="inferred from homology"/>
<gene>
    <name type="primary">cyp513A3</name>
    <name type="ORF">DDB_G0270354</name>
</gene>
<reference key="1">
    <citation type="journal article" date="2005" name="Nature">
        <title>The genome of the social amoeba Dictyostelium discoideum.</title>
        <authorList>
            <person name="Eichinger L."/>
            <person name="Pachebat J.A."/>
            <person name="Gloeckner G."/>
            <person name="Rajandream M.A."/>
            <person name="Sucgang R."/>
            <person name="Berriman M."/>
            <person name="Song J."/>
            <person name="Olsen R."/>
            <person name="Szafranski K."/>
            <person name="Xu Q."/>
            <person name="Tunggal B."/>
            <person name="Kummerfeld S."/>
            <person name="Madera M."/>
            <person name="Konfortov B.A."/>
            <person name="Rivero F."/>
            <person name="Bankier A.T."/>
            <person name="Lehmann R."/>
            <person name="Hamlin N."/>
            <person name="Davies R."/>
            <person name="Gaudet P."/>
            <person name="Fey P."/>
            <person name="Pilcher K."/>
            <person name="Chen G."/>
            <person name="Saunders D."/>
            <person name="Sodergren E.J."/>
            <person name="Davis P."/>
            <person name="Kerhornou A."/>
            <person name="Nie X."/>
            <person name="Hall N."/>
            <person name="Anjard C."/>
            <person name="Hemphill L."/>
            <person name="Bason N."/>
            <person name="Farbrother P."/>
            <person name="Desany B."/>
            <person name="Just E."/>
            <person name="Morio T."/>
            <person name="Rost R."/>
            <person name="Churcher C.M."/>
            <person name="Cooper J."/>
            <person name="Haydock S."/>
            <person name="van Driessche N."/>
            <person name="Cronin A."/>
            <person name="Goodhead I."/>
            <person name="Muzny D.M."/>
            <person name="Mourier T."/>
            <person name="Pain A."/>
            <person name="Lu M."/>
            <person name="Harper D."/>
            <person name="Lindsay R."/>
            <person name="Hauser H."/>
            <person name="James K.D."/>
            <person name="Quiles M."/>
            <person name="Madan Babu M."/>
            <person name="Saito T."/>
            <person name="Buchrieser C."/>
            <person name="Wardroper A."/>
            <person name="Felder M."/>
            <person name="Thangavelu M."/>
            <person name="Johnson D."/>
            <person name="Knights A."/>
            <person name="Loulseged H."/>
            <person name="Mungall K.L."/>
            <person name="Oliver K."/>
            <person name="Price C."/>
            <person name="Quail M.A."/>
            <person name="Urushihara H."/>
            <person name="Hernandez J."/>
            <person name="Rabbinowitsch E."/>
            <person name="Steffen D."/>
            <person name="Sanders M."/>
            <person name="Ma J."/>
            <person name="Kohara Y."/>
            <person name="Sharp S."/>
            <person name="Simmonds M.N."/>
            <person name="Spiegler S."/>
            <person name="Tivey A."/>
            <person name="Sugano S."/>
            <person name="White B."/>
            <person name="Walker D."/>
            <person name="Woodward J.R."/>
            <person name="Winckler T."/>
            <person name="Tanaka Y."/>
            <person name="Shaulsky G."/>
            <person name="Schleicher M."/>
            <person name="Weinstock G.M."/>
            <person name="Rosenthal A."/>
            <person name="Cox E.C."/>
            <person name="Chisholm R.L."/>
            <person name="Gibbs R.A."/>
            <person name="Loomis W.F."/>
            <person name="Platzer M."/>
            <person name="Kay R.R."/>
            <person name="Williams J.G."/>
            <person name="Dear P.H."/>
            <person name="Noegel A.A."/>
            <person name="Barrell B.G."/>
            <person name="Kuspa A."/>
        </authorList>
    </citation>
    <scope>NUCLEOTIDE SEQUENCE [LARGE SCALE GENOMIC DNA]</scope>
    <source>
        <strain>AX4</strain>
    </source>
</reference>
<organism>
    <name type="scientific">Dictyostelium discoideum</name>
    <name type="common">Social amoeba</name>
    <dbReference type="NCBI Taxonomy" id="44689"/>
    <lineage>
        <taxon>Eukaryota</taxon>
        <taxon>Amoebozoa</taxon>
        <taxon>Evosea</taxon>
        <taxon>Eumycetozoa</taxon>
        <taxon>Dictyostelia</taxon>
        <taxon>Dictyosteliales</taxon>
        <taxon>Dictyosteliaceae</taxon>
        <taxon>Dictyostelium</taxon>
    </lineage>
</organism>
<sequence>MTSLTLYLIIFSIILYLFVNRNKRKNLKIPGPNGIPIFGNLLSLSGEMHLTLQEWYKTYGSVFSIRMGNIDTVVLTEYPTIRKAFVDNSLAFASRYQLKSRVVLTGAKDLAIQNGEIHSLLKKVVLSEMTTTKIKRMEIHIIKETEKILKILDKHAERGEPFIINNYLNMFSMNVILRFLLGIDYPYENVDETVGYVKSIKSFFAVAGLPILSDFIPIPLKKSGVFFDSYKELEIETDKLIEKFKKSRNEKIENGTYNEEEDESILSKLLKEYEHGNITWECVSHTCIDIISAGTDTSANTLVMALIELINNQEIQSKAFSSIRSSCLNDSNDDDDDDEIVITHSKYRSLLPYISMIIKETFRKHPIALLGLPHVTTEDVEIDGYKIEAGTYIIQNIFSSHRSDKIFQSPNEFIPERFFESSQNQGLIHFGLGVRDCVGKSLAECEIFTLIATLLNRYQFINPNNSKKLNDIGTFGLAQVCPDTNIILKKRI</sequence>
<evidence type="ECO:0000250" key="1"/>
<evidence type="ECO:0000255" key="2"/>
<evidence type="ECO:0000305" key="3"/>
<accession>Q55BU9</accession>
<dbReference type="EC" id="1.14.-.-"/>
<dbReference type="EMBL" id="AAFI02000005">
    <property type="protein sequence ID" value="EAL72527.1"/>
    <property type="molecule type" value="Genomic_DNA"/>
</dbReference>
<dbReference type="RefSeq" id="XP_646732.1">
    <property type="nucleotide sequence ID" value="XM_641640.1"/>
</dbReference>
<dbReference type="SMR" id="Q55BU9"/>
<dbReference type="STRING" id="44689.Q55BU9"/>
<dbReference type="PaxDb" id="44689-DDB0232338"/>
<dbReference type="EnsemblProtists" id="EAL72527">
    <property type="protein sequence ID" value="EAL72527"/>
    <property type="gene ID" value="DDB_G0270354"/>
</dbReference>
<dbReference type="GeneID" id="8617704"/>
<dbReference type="KEGG" id="ddi:DDB_G0270354"/>
<dbReference type="dictyBase" id="DDB_G0270354">
    <property type="gene designation" value="cyp513A3"/>
</dbReference>
<dbReference type="VEuPathDB" id="AmoebaDB:DDB_G0270354"/>
<dbReference type="eggNOG" id="KOG0156">
    <property type="taxonomic scope" value="Eukaryota"/>
</dbReference>
<dbReference type="HOGENOM" id="CLU_001570_22_0_1"/>
<dbReference type="InParanoid" id="Q55BU9"/>
<dbReference type="OMA" id="HMAYNGR"/>
<dbReference type="PhylomeDB" id="Q55BU9"/>
<dbReference type="PRO" id="PR:Q55BU9"/>
<dbReference type="Proteomes" id="UP000002195">
    <property type="component" value="Chromosome 1"/>
</dbReference>
<dbReference type="GO" id="GO:0016020">
    <property type="term" value="C:membrane"/>
    <property type="evidence" value="ECO:0007669"/>
    <property type="project" value="UniProtKB-SubCell"/>
</dbReference>
<dbReference type="GO" id="GO:0020037">
    <property type="term" value="F:heme binding"/>
    <property type="evidence" value="ECO:0007669"/>
    <property type="project" value="InterPro"/>
</dbReference>
<dbReference type="GO" id="GO:0005506">
    <property type="term" value="F:iron ion binding"/>
    <property type="evidence" value="ECO:0007669"/>
    <property type="project" value="InterPro"/>
</dbReference>
<dbReference type="GO" id="GO:0004497">
    <property type="term" value="F:monooxygenase activity"/>
    <property type="evidence" value="ECO:0007669"/>
    <property type="project" value="UniProtKB-KW"/>
</dbReference>
<dbReference type="GO" id="GO:0016705">
    <property type="term" value="F:oxidoreductase activity, acting on paired donors, with incorporation or reduction of molecular oxygen"/>
    <property type="evidence" value="ECO:0007669"/>
    <property type="project" value="InterPro"/>
</dbReference>
<dbReference type="CDD" id="cd20617">
    <property type="entry name" value="CYP1_2-like"/>
    <property type="match status" value="1"/>
</dbReference>
<dbReference type="Gene3D" id="1.10.630.10">
    <property type="entry name" value="Cytochrome P450"/>
    <property type="match status" value="1"/>
</dbReference>
<dbReference type="InterPro" id="IPR001128">
    <property type="entry name" value="Cyt_P450"/>
</dbReference>
<dbReference type="InterPro" id="IPR017972">
    <property type="entry name" value="Cyt_P450_CS"/>
</dbReference>
<dbReference type="InterPro" id="IPR002401">
    <property type="entry name" value="Cyt_P450_E_grp-I"/>
</dbReference>
<dbReference type="InterPro" id="IPR036396">
    <property type="entry name" value="Cyt_P450_sf"/>
</dbReference>
<dbReference type="PANTHER" id="PTHR24303:SF11">
    <property type="entry name" value="CYTOCHROME P450 513A1-RELATED"/>
    <property type="match status" value="1"/>
</dbReference>
<dbReference type="PANTHER" id="PTHR24303">
    <property type="entry name" value="HEME-BINDING MONOOXYGENASE FAMILY"/>
    <property type="match status" value="1"/>
</dbReference>
<dbReference type="Pfam" id="PF00067">
    <property type="entry name" value="p450"/>
    <property type="match status" value="1"/>
</dbReference>
<dbReference type="PRINTS" id="PR00463">
    <property type="entry name" value="EP450I"/>
</dbReference>
<dbReference type="PRINTS" id="PR00385">
    <property type="entry name" value="P450"/>
</dbReference>
<dbReference type="SUPFAM" id="SSF48264">
    <property type="entry name" value="Cytochrome P450"/>
    <property type="match status" value="1"/>
</dbReference>
<dbReference type="PROSITE" id="PS00086">
    <property type="entry name" value="CYTOCHROME_P450"/>
    <property type="match status" value="1"/>
</dbReference>
<feature type="chain" id="PRO_0000318814" description="Probable cytochrome P450 513A3">
    <location>
        <begin position="1"/>
        <end position="492"/>
    </location>
</feature>
<feature type="transmembrane region" description="Helical" evidence="2">
    <location>
        <begin position="1"/>
        <end position="21"/>
    </location>
</feature>
<feature type="binding site" description="axial binding residue" evidence="1">
    <location>
        <position position="437"/>
    </location>
    <ligand>
        <name>heme</name>
        <dbReference type="ChEBI" id="CHEBI:30413"/>
    </ligand>
    <ligandPart>
        <name>Fe</name>
        <dbReference type="ChEBI" id="CHEBI:18248"/>
    </ligandPart>
</feature>
<name>C5133_DICDI</name>
<keyword id="KW-0349">Heme</keyword>
<keyword id="KW-0408">Iron</keyword>
<keyword id="KW-0472">Membrane</keyword>
<keyword id="KW-0479">Metal-binding</keyword>
<keyword id="KW-0503">Monooxygenase</keyword>
<keyword id="KW-0560">Oxidoreductase</keyword>
<keyword id="KW-1185">Reference proteome</keyword>
<keyword id="KW-0812">Transmembrane</keyword>
<keyword id="KW-1133">Transmembrane helix</keyword>
<comment type="cofactor">
    <cofactor evidence="1">
        <name>heme</name>
        <dbReference type="ChEBI" id="CHEBI:30413"/>
    </cofactor>
</comment>
<comment type="subcellular location">
    <subcellularLocation>
        <location evidence="3">Membrane</location>
        <topology evidence="3">Single-pass membrane protein</topology>
    </subcellularLocation>
</comment>
<comment type="similarity">
    <text evidence="3">Belongs to the cytochrome P450 family.</text>
</comment>
<protein>
    <recommendedName>
        <fullName>Probable cytochrome P450 513A3</fullName>
        <ecNumber>1.14.-.-</ecNumber>
    </recommendedName>
</protein>